<name>3PASE_ACET2</name>
<accession>A3DIJ8</accession>
<protein>
    <recommendedName>
        <fullName>Inorganic triphosphatase</fullName>
        <shortName>PPPase</shortName>
        <ecNumber>3.6.1.25</ecNumber>
    </recommendedName>
    <alternativeName>
        <fullName>Adenosinetriphosphatase</fullName>
        <shortName>ATPase</shortName>
    </alternativeName>
    <alternativeName>
        <fullName>Polyphosphatase</fullName>
    </alternativeName>
</protein>
<comment type="function">
    <text evidence="3">Involved in the hydrolysis of the beta-gamma-phosphoanhydride linkage of triphosphate-containing substrates (inorganic or nucleoside-linked). Catalyzes vigorously the hydrolysis of inorganic triphosphate (PPPi), however it can also catalyze the hydrolysis of ATP to ADP and phosphate. It can use ribonucleotides such as GTP, CTP, or UTP and deoxynucleotides such as dATP, dGTP, dCTP, and dTTP.</text>
</comment>
<comment type="catalytic activity">
    <reaction evidence="3">
        <text>triphosphate + H2O = phosphate + diphosphate</text>
        <dbReference type="Rhea" id="RHEA:14157"/>
        <dbReference type="ChEBI" id="CHEBI:15377"/>
        <dbReference type="ChEBI" id="CHEBI:18036"/>
        <dbReference type="ChEBI" id="CHEBI:33019"/>
        <dbReference type="ChEBI" id="CHEBI:43474"/>
        <dbReference type="EC" id="3.6.1.25"/>
    </reaction>
</comment>
<comment type="catalytic activity">
    <reaction evidence="3">
        <text>ATP + H2O = ADP + phosphate + H(+)</text>
        <dbReference type="Rhea" id="RHEA:13065"/>
        <dbReference type="ChEBI" id="CHEBI:15377"/>
        <dbReference type="ChEBI" id="CHEBI:15378"/>
        <dbReference type="ChEBI" id="CHEBI:30616"/>
        <dbReference type="ChEBI" id="CHEBI:43474"/>
        <dbReference type="ChEBI" id="CHEBI:456216"/>
    </reaction>
</comment>
<comment type="biophysicochemical properties">
    <kinetics>
        <KM evidence="3">26 uM for ATP</KM>
        <text>kcat is 25 min(-1) for ATPase activity.</text>
    </kinetics>
    <phDependence>
        <text evidence="3">Optimum pH is between 8 and 8.5 for ATPase activity and between 9 and 9.5 for PPPase activity. Hydrolysis of ATP declines sharply as the pH is increased to 9.5 or decreased to below 7.0.</text>
    </phDependence>
</comment>
<comment type="subunit">
    <text evidence="3">Homodimer.</text>
</comment>
<feature type="chain" id="PRO_0000426736" description="Inorganic triphosphatase">
    <location>
        <begin position="1"/>
        <end position="156"/>
    </location>
</feature>
<feature type="domain" description="CYTH" evidence="2">
    <location>
        <begin position="2"/>
        <end position="148"/>
    </location>
</feature>
<feature type="active site" description="Proton acceptor" evidence="1">
    <location>
        <position position="29"/>
    </location>
</feature>
<feature type="mutagenesis site" description="Partial loss of ATPase activity and strong loss of inorganic triphosphatase activity." evidence="3">
    <original>E</original>
    <variation>A</variation>
    <location>
        <position position="4"/>
    </location>
</feature>
<feature type="mutagenesis site" description="Strong loss of ATPase and inorganic triphosphatase activities." evidence="3">
    <original>E</original>
    <variation>A</variation>
    <location>
        <position position="6"/>
    </location>
</feature>
<feature type="mutagenesis site" description="16-fold increase in ATPase activity and strong loss of inorganic triphosphatase activity.">
    <original>K</original>
    <variation>A</variation>
    <location>
        <position position="8"/>
    </location>
</feature>
<feature type="mutagenesis site" description="Strong loss of ATPase and inorganic triphosphatase activities." evidence="3">
    <original>R</original>
    <variation>A</variation>
    <location>
        <position position="39"/>
    </location>
</feature>
<feature type="mutagenesis site" description="Strong loss of ATPase and inorganic triphosphatase activities." evidence="3">
    <original>R</original>
    <variation>A</variation>
    <location>
        <position position="41"/>
    </location>
</feature>
<feature type="mutagenesis site" description="Strong loss of ATPase activity and partial loss of inorganic triphosphatase activity." evidence="3">
    <original>K</original>
    <variation>A</variation>
    <location>
        <position position="52"/>
    </location>
</feature>
<feature type="mutagenesis site" description="Strong loss of ATPase and inorganic triphosphatase activities." evidence="3">
    <original>E</original>
    <variation>A</variation>
    <location>
        <position position="62"/>
    </location>
</feature>
<feature type="mutagenesis site" description="Partial loss of ATPase activity and strong loss of inorganic triphosphatase activity." evidence="3">
    <original>E</original>
    <variation>A</variation>
    <location>
        <position position="64"/>
    </location>
</feature>
<feature type="mutagenesis site" description="Strong loss of ATPase and inorganic triphosphatase activities." evidence="3">
    <original>K</original>
    <variation>A</variation>
    <location>
        <position position="87"/>
    </location>
</feature>
<feature type="mutagenesis site" description="Strong loss of ATPase and inorganic triphosphatase activities." evidence="3">
    <original>R</original>
    <variation>A</variation>
    <location>
        <position position="89"/>
    </location>
</feature>
<feature type="mutagenesis site" description="Partial loss of ATPase and inorganic triphosphatase activities. However, the inorganic triphosphatase activity is restored when manganese replaces magnesium.">
    <original>E</original>
    <variation>A</variation>
    <location>
        <position position="100"/>
    </location>
</feature>
<feature type="mutagenesis site" description="Strong loss of ATPase and inorganic triphosphatase activities. However, the inorganic triphosphatase activity is restored when manganese replaces magnesium." evidence="3">
    <original>D</original>
    <variation>A</variation>
    <location>
        <position position="102"/>
    </location>
</feature>
<feature type="mutagenesis site" description="Partial loss of ATPase activity and inorganic triphosphatase activities." evidence="3">
    <original>E</original>
    <variation>A</variation>
    <location>
        <position position="115"/>
    </location>
</feature>
<feature type="mutagenesis site" description="Strong loss of ATPase activity and inorganic triphosphatase activities." evidence="3">
    <original>E</original>
    <variation>A</variation>
    <location>
        <position position="117"/>
    </location>
</feature>
<proteinExistence type="evidence at protein level"/>
<evidence type="ECO:0000250" key="1"/>
<evidence type="ECO:0000255" key="2">
    <source>
        <dbReference type="PROSITE-ProRule" id="PRU01044"/>
    </source>
</evidence>
<evidence type="ECO:0000269" key="3">
    <source>
    </source>
</evidence>
<dbReference type="EC" id="3.6.1.25"/>
<dbReference type="EMBL" id="CP000568">
    <property type="protein sequence ID" value="ABN53777.1"/>
    <property type="molecule type" value="Genomic_DNA"/>
</dbReference>
<dbReference type="RefSeq" id="WP_020457870.1">
    <property type="nucleotide sequence ID" value="NC_009012.1"/>
</dbReference>
<dbReference type="SMR" id="A3DIJ8"/>
<dbReference type="STRING" id="203119.Cthe_2577"/>
<dbReference type="GeneID" id="35803044"/>
<dbReference type="KEGG" id="cth:Cthe_2577"/>
<dbReference type="eggNOG" id="COG2954">
    <property type="taxonomic scope" value="Bacteria"/>
</dbReference>
<dbReference type="HOGENOM" id="CLU_109545_1_0_9"/>
<dbReference type="OrthoDB" id="9805588at2"/>
<dbReference type="SABIO-RK" id="A3DIJ8"/>
<dbReference type="Proteomes" id="UP000002145">
    <property type="component" value="Chromosome"/>
</dbReference>
<dbReference type="GO" id="GO:0005524">
    <property type="term" value="F:ATP binding"/>
    <property type="evidence" value="ECO:0007669"/>
    <property type="project" value="UniProtKB-KW"/>
</dbReference>
<dbReference type="GO" id="GO:0016887">
    <property type="term" value="F:ATP hydrolysis activity"/>
    <property type="evidence" value="ECO:0000314"/>
    <property type="project" value="UniProtKB"/>
</dbReference>
<dbReference type="GO" id="GO:0050355">
    <property type="term" value="F:inorganic triphosphate phosphatase activity"/>
    <property type="evidence" value="ECO:0000314"/>
    <property type="project" value="UniProtKB"/>
</dbReference>
<dbReference type="CDD" id="cd07891">
    <property type="entry name" value="CYTH-like_CthTTM-like_1"/>
    <property type="match status" value="1"/>
</dbReference>
<dbReference type="Gene3D" id="2.40.320.10">
    <property type="entry name" value="Hypothetical Protein Pfu-838710-001"/>
    <property type="match status" value="1"/>
</dbReference>
<dbReference type="InterPro" id="IPR033469">
    <property type="entry name" value="CYTH-like_dom_sf"/>
</dbReference>
<dbReference type="InterPro" id="IPR023577">
    <property type="entry name" value="CYTH_domain"/>
</dbReference>
<dbReference type="InterPro" id="IPR012042">
    <property type="entry name" value="NeuTTM/CthTTM-like"/>
</dbReference>
<dbReference type="PANTHER" id="PTHR40114">
    <property type="entry name" value="SLR0698 PROTEIN"/>
    <property type="match status" value="1"/>
</dbReference>
<dbReference type="PANTHER" id="PTHR40114:SF1">
    <property type="entry name" value="SLR0698 PROTEIN"/>
    <property type="match status" value="1"/>
</dbReference>
<dbReference type="Pfam" id="PF01928">
    <property type="entry name" value="CYTH"/>
    <property type="match status" value="1"/>
</dbReference>
<dbReference type="PIRSF" id="PIRSF016487">
    <property type="entry name" value="CYTH_UCP016487"/>
    <property type="match status" value="1"/>
</dbReference>
<dbReference type="SMART" id="SM01118">
    <property type="entry name" value="CYTH"/>
    <property type="match status" value="1"/>
</dbReference>
<dbReference type="SUPFAM" id="SSF55154">
    <property type="entry name" value="CYTH-like phosphatases"/>
    <property type="match status" value="1"/>
</dbReference>
<dbReference type="PROSITE" id="PS51707">
    <property type="entry name" value="CYTH"/>
    <property type="match status" value="1"/>
</dbReference>
<gene>
    <name type="ordered locus">Cthe_2577</name>
</gene>
<reference key="1">
    <citation type="submission" date="2007-02" db="EMBL/GenBank/DDBJ databases">
        <title>Complete sequence of Clostridium thermocellum ATCC 27405.</title>
        <authorList>
            <consortium name="US DOE Joint Genome Institute"/>
            <person name="Copeland A."/>
            <person name="Lucas S."/>
            <person name="Lapidus A."/>
            <person name="Barry K."/>
            <person name="Detter J.C."/>
            <person name="Glavina del Rio T."/>
            <person name="Hammon N."/>
            <person name="Israni S."/>
            <person name="Dalin E."/>
            <person name="Tice H."/>
            <person name="Pitluck S."/>
            <person name="Chertkov O."/>
            <person name="Brettin T."/>
            <person name="Bruce D."/>
            <person name="Han C."/>
            <person name="Tapia R."/>
            <person name="Gilna P."/>
            <person name="Schmutz J."/>
            <person name="Larimer F."/>
            <person name="Land M."/>
            <person name="Hauser L."/>
            <person name="Kyrpides N."/>
            <person name="Mikhailova N."/>
            <person name="Wu J.H.D."/>
            <person name="Newcomb M."/>
            <person name="Richardson P."/>
        </authorList>
    </citation>
    <scope>NUCLEOTIDE SEQUENCE [LARGE SCALE GENOMIC DNA]</scope>
    <source>
        <strain>ATCC 27405 / DSM 1237 / JCM 9322 / NBRC 103400 / NCIMB 10682 / NRRL B-4536 / VPI 7372</strain>
    </source>
</reference>
<reference key="2">
    <citation type="journal article" date="2007" name="J. Biol. Chem.">
        <title>Novel triphosphate phosphohydrolase activity of Clostridium thermocellum TTM, a member of the triphosphate tunnel metalloenzyme superfamily.</title>
        <authorList>
            <person name="Keppetipola N."/>
            <person name="Jain R."/>
            <person name="Shuman S."/>
        </authorList>
    </citation>
    <scope>FUNCTION</scope>
    <scope>CATALYTIC ACTIVITY</scope>
    <scope>MUTAGENESIS OF GLU-4; GLU-6; ARG-39; ARG-41; LYS-52; GLU-62; GLU-64; LYS-87; ARG-89; ASP-102; GLU-115 AND GLU-117</scope>
    <scope>BIOPHYSICOCHEMICAL PROPERTIES</scope>
    <scope>SUBSTRATE SPECIFICITY</scope>
    <scope>SUBUNIT</scope>
</reference>
<sequence length="156" mass="18159">MGKEIEKKFIVSGDAYKSLAKGVLYRQGYIFFDKDKSVRVRVFNDKGYLTVKGTSTGISRLEYEYEIPVGEANEILEYLCEKPVIEKLRYKFQFEGFTWEVDEFLGENEGLVIAEIELPDENAVFKKPDWIGREVTGDPRYLNSNLVKNPYKNFKE</sequence>
<organism>
    <name type="scientific">Acetivibrio thermocellus (strain ATCC 27405 / DSM 1237 / JCM 9322 / NBRC 103400 / NCIMB 10682 / NRRL B-4536 / VPI 7372)</name>
    <name type="common">Clostridium thermocellum</name>
    <dbReference type="NCBI Taxonomy" id="203119"/>
    <lineage>
        <taxon>Bacteria</taxon>
        <taxon>Bacillati</taxon>
        <taxon>Bacillota</taxon>
        <taxon>Clostridia</taxon>
        <taxon>Eubacteriales</taxon>
        <taxon>Oscillospiraceae</taxon>
        <taxon>Acetivibrio</taxon>
    </lineage>
</organism>
<keyword id="KW-0067">ATP-binding</keyword>
<keyword id="KW-0378">Hydrolase</keyword>
<keyword id="KW-0547">Nucleotide-binding</keyword>
<keyword id="KW-1185">Reference proteome</keyword>